<reference key="1">
    <citation type="journal article" date="2004" name="Nucleic Acids Res.">
        <title>The genome sequence of Bacillus cereus ATCC 10987 reveals metabolic adaptations and a large plasmid related to Bacillus anthracis pXO1.</title>
        <authorList>
            <person name="Rasko D.A."/>
            <person name="Ravel J."/>
            <person name="Oekstad O.A."/>
            <person name="Helgason E."/>
            <person name="Cer R.Z."/>
            <person name="Jiang L."/>
            <person name="Shores K.A."/>
            <person name="Fouts D.E."/>
            <person name="Tourasse N.J."/>
            <person name="Angiuoli S.V."/>
            <person name="Kolonay J.F."/>
            <person name="Nelson W.C."/>
            <person name="Kolstoe A.-B."/>
            <person name="Fraser C.M."/>
            <person name="Read T.D."/>
        </authorList>
    </citation>
    <scope>NUCLEOTIDE SEQUENCE [LARGE SCALE GENOMIC DNA]</scope>
    <source>
        <strain>ATCC 10987 / NRS 248</strain>
    </source>
</reference>
<keyword id="KW-0238">DNA-binding</keyword>
<keyword id="KW-0804">Transcription</keyword>
<keyword id="KW-0805">Transcription regulation</keyword>
<dbReference type="EMBL" id="AE017194">
    <property type="protein sequence ID" value="AAS39162.1"/>
    <property type="molecule type" value="Genomic_DNA"/>
</dbReference>
<dbReference type="SMR" id="Q73EY2"/>
<dbReference type="KEGG" id="bca:BCE_0226"/>
<dbReference type="HOGENOM" id="CLU_039613_6_1_9"/>
<dbReference type="Proteomes" id="UP000002527">
    <property type="component" value="Chromosome"/>
</dbReference>
<dbReference type="GO" id="GO:0003700">
    <property type="term" value="F:DNA-binding transcription factor activity"/>
    <property type="evidence" value="ECO:0007669"/>
    <property type="project" value="InterPro"/>
</dbReference>
<dbReference type="GO" id="GO:0000976">
    <property type="term" value="F:transcription cis-regulatory region binding"/>
    <property type="evidence" value="ECO:0007669"/>
    <property type="project" value="TreeGrafter"/>
</dbReference>
<dbReference type="CDD" id="cd08442">
    <property type="entry name" value="PBP2_YofA_SoxR_like"/>
    <property type="match status" value="1"/>
</dbReference>
<dbReference type="FunFam" id="1.10.10.10:FF:000001">
    <property type="entry name" value="LysR family transcriptional regulator"/>
    <property type="match status" value="1"/>
</dbReference>
<dbReference type="Gene3D" id="3.40.190.290">
    <property type="match status" value="1"/>
</dbReference>
<dbReference type="Gene3D" id="1.10.10.10">
    <property type="entry name" value="Winged helix-like DNA-binding domain superfamily/Winged helix DNA-binding domain"/>
    <property type="match status" value="1"/>
</dbReference>
<dbReference type="InterPro" id="IPR005119">
    <property type="entry name" value="LysR_subst-bd"/>
</dbReference>
<dbReference type="InterPro" id="IPR000847">
    <property type="entry name" value="Tscrpt_reg_HTH_LysR"/>
</dbReference>
<dbReference type="InterPro" id="IPR036388">
    <property type="entry name" value="WH-like_DNA-bd_sf"/>
</dbReference>
<dbReference type="InterPro" id="IPR036390">
    <property type="entry name" value="WH_DNA-bd_sf"/>
</dbReference>
<dbReference type="PANTHER" id="PTHR30126">
    <property type="entry name" value="HTH-TYPE TRANSCRIPTIONAL REGULATOR"/>
    <property type="match status" value="1"/>
</dbReference>
<dbReference type="PANTHER" id="PTHR30126:SF40">
    <property type="entry name" value="HTH-TYPE TRANSCRIPTIONAL REGULATOR GLTR"/>
    <property type="match status" value="1"/>
</dbReference>
<dbReference type="Pfam" id="PF00126">
    <property type="entry name" value="HTH_1"/>
    <property type="match status" value="1"/>
</dbReference>
<dbReference type="Pfam" id="PF03466">
    <property type="entry name" value="LysR_substrate"/>
    <property type="match status" value="1"/>
</dbReference>
<dbReference type="PRINTS" id="PR00039">
    <property type="entry name" value="HTHLYSR"/>
</dbReference>
<dbReference type="SUPFAM" id="SSF53850">
    <property type="entry name" value="Periplasmic binding protein-like II"/>
    <property type="match status" value="1"/>
</dbReference>
<dbReference type="SUPFAM" id="SSF46785">
    <property type="entry name" value="Winged helix' DNA-binding domain"/>
    <property type="match status" value="1"/>
</dbReference>
<dbReference type="PROSITE" id="PS50931">
    <property type="entry name" value="HTH_LYSR"/>
    <property type="match status" value="1"/>
</dbReference>
<gene>
    <name type="primary">czcR</name>
    <name type="ordered locus">BCE_0226</name>
</gene>
<proteinExistence type="inferred from homology"/>
<protein>
    <recommendedName>
        <fullName>HTH-type transcriptional regulator CzcR</fullName>
    </recommendedName>
</protein>
<sequence>MELRDLQIFQSVADQGSVSSAAKELNYVQSNVTARIKQLENELKTPLFYRHKRGMTLTAEGRKMLVYVNKILQDVDELKQVFLDSETPSGILKIGTVETVSTLPTILSSYYKSYPNVDLSLQAGLTEELIREVLDHQLDGAFISGPIKHPLIEQYDVSTEKLMLVTQNKAFHIEEFTTTPLLVFNQGCGYRSKLERWLKDEGLLPKRIMEFNILETILNSVALGLGITLVPQSAVHHLSKAGKVHCHAIPEKYGSISTVFIRRKDSYMTNSMRSFLKTIEEHHHINML</sequence>
<accession>Q73EY2</accession>
<name>CZCR_BACC1</name>
<comment type="similarity">
    <text evidence="2">Belongs to the LysR transcriptional regulatory family.</text>
</comment>
<organism>
    <name type="scientific">Bacillus cereus (strain ATCC 10987 / NRS 248)</name>
    <dbReference type="NCBI Taxonomy" id="222523"/>
    <lineage>
        <taxon>Bacteria</taxon>
        <taxon>Bacillati</taxon>
        <taxon>Bacillota</taxon>
        <taxon>Bacilli</taxon>
        <taxon>Bacillales</taxon>
        <taxon>Bacillaceae</taxon>
        <taxon>Bacillus</taxon>
        <taxon>Bacillus cereus group</taxon>
    </lineage>
</organism>
<evidence type="ECO:0000255" key="1">
    <source>
        <dbReference type="PROSITE-ProRule" id="PRU00253"/>
    </source>
</evidence>
<evidence type="ECO:0000305" key="2"/>
<feature type="chain" id="PRO_0000334139" description="HTH-type transcriptional regulator CzcR">
    <location>
        <begin position="1"/>
        <end position="288"/>
    </location>
</feature>
<feature type="domain" description="HTH lysR-type" evidence="1">
    <location>
        <begin position="1"/>
        <end position="58"/>
    </location>
</feature>
<feature type="DNA-binding region" description="H-T-H motif" evidence="1">
    <location>
        <begin position="18"/>
        <end position="37"/>
    </location>
</feature>